<organism>
    <name type="scientific">Chromohalobacter salexigens (strain ATCC BAA-138 / DSM 3043 / CIP 106854 / NCIMB 13768 / 1H11)</name>
    <dbReference type="NCBI Taxonomy" id="290398"/>
    <lineage>
        <taxon>Bacteria</taxon>
        <taxon>Pseudomonadati</taxon>
        <taxon>Pseudomonadota</taxon>
        <taxon>Gammaproteobacteria</taxon>
        <taxon>Oceanospirillales</taxon>
        <taxon>Halomonadaceae</taxon>
        <taxon>Chromohalobacter</taxon>
    </lineage>
</organism>
<proteinExistence type="inferred from homology"/>
<gene>
    <name type="primary">acyP</name>
    <name type="ordered locus">Csal_1839</name>
</gene>
<name>ACYP_CHRSD</name>
<accession>Q1QWG7</accession>
<keyword id="KW-0378">Hydrolase</keyword>
<keyword id="KW-1185">Reference proteome</keyword>
<protein>
    <recommendedName>
        <fullName evidence="1">Acylphosphatase</fullName>
        <ecNumber evidence="1">3.6.1.7</ecNumber>
    </recommendedName>
    <alternativeName>
        <fullName evidence="1">Acylphosphate phosphohydrolase</fullName>
    </alternativeName>
</protein>
<comment type="catalytic activity">
    <reaction evidence="1">
        <text>an acyl phosphate + H2O = a carboxylate + phosphate + H(+)</text>
        <dbReference type="Rhea" id="RHEA:14965"/>
        <dbReference type="ChEBI" id="CHEBI:15377"/>
        <dbReference type="ChEBI" id="CHEBI:15378"/>
        <dbReference type="ChEBI" id="CHEBI:29067"/>
        <dbReference type="ChEBI" id="CHEBI:43474"/>
        <dbReference type="ChEBI" id="CHEBI:59918"/>
        <dbReference type="EC" id="3.6.1.7"/>
    </reaction>
</comment>
<comment type="similarity">
    <text evidence="3">Belongs to the acylphosphatase family.</text>
</comment>
<dbReference type="EC" id="3.6.1.7" evidence="1"/>
<dbReference type="EMBL" id="CP000285">
    <property type="protein sequence ID" value="ABE59191.1"/>
    <property type="molecule type" value="Genomic_DNA"/>
</dbReference>
<dbReference type="RefSeq" id="WP_011507137.1">
    <property type="nucleotide sequence ID" value="NC_007963.1"/>
</dbReference>
<dbReference type="SMR" id="Q1QWG7"/>
<dbReference type="STRING" id="290398.Csal_1839"/>
<dbReference type="GeneID" id="95334556"/>
<dbReference type="KEGG" id="csa:Csal_1839"/>
<dbReference type="eggNOG" id="COG1254">
    <property type="taxonomic scope" value="Bacteria"/>
</dbReference>
<dbReference type="HOGENOM" id="CLU_141932_1_3_6"/>
<dbReference type="OrthoDB" id="5295388at2"/>
<dbReference type="Proteomes" id="UP000000239">
    <property type="component" value="Chromosome"/>
</dbReference>
<dbReference type="GO" id="GO:0003998">
    <property type="term" value="F:acylphosphatase activity"/>
    <property type="evidence" value="ECO:0007669"/>
    <property type="project" value="UniProtKB-EC"/>
</dbReference>
<dbReference type="Gene3D" id="3.30.70.100">
    <property type="match status" value="1"/>
</dbReference>
<dbReference type="InterPro" id="IPR020456">
    <property type="entry name" value="Acylphosphatase"/>
</dbReference>
<dbReference type="InterPro" id="IPR001792">
    <property type="entry name" value="Acylphosphatase-like_dom"/>
</dbReference>
<dbReference type="InterPro" id="IPR036046">
    <property type="entry name" value="Acylphosphatase-like_dom_sf"/>
</dbReference>
<dbReference type="InterPro" id="IPR017968">
    <property type="entry name" value="Acylphosphatase_CS"/>
</dbReference>
<dbReference type="NCBIfam" id="NF011000">
    <property type="entry name" value="PRK14426.1"/>
    <property type="match status" value="1"/>
</dbReference>
<dbReference type="PANTHER" id="PTHR47268">
    <property type="entry name" value="ACYLPHOSPHATASE"/>
    <property type="match status" value="1"/>
</dbReference>
<dbReference type="PANTHER" id="PTHR47268:SF4">
    <property type="entry name" value="ACYLPHOSPHATASE"/>
    <property type="match status" value="1"/>
</dbReference>
<dbReference type="Pfam" id="PF00708">
    <property type="entry name" value="Acylphosphatase"/>
    <property type="match status" value="1"/>
</dbReference>
<dbReference type="SUPFAM" id="SSF54975">
    <property type="entry name" value="Acylphosphatase/BLUF domain-like"/>
    <property type="match status" value="1"/>
</dbReference>
<dbReference type="PROSITE" id="PS00150">
    <property type="entry name" value="ACYLPHOSPHATASE_1"/>
    <property type="match status" value="1"/>
</dbReference>
<dbReference type="PROSITE" id="PS00151">
    <property type="entry name" value="ACYLPHOSPHATASE_2"/>
    <property type="match status" value="1"/>
</dbReference>
<dbReference type="PROSITE" id="PS51160">
    <property type="entry name" value="ACYLPHOSPHATASE_3"/>
    <property type="match status" value="1"/>
</dbReference>
<feature type="chain" id="PRO_0000326681" description="Acylphosphatase">
    <location>
        <begin position="1"/>
        <end position="90"/>
    </location>
</feature>
<feature type="domain" description="Acylphosphatase-like" evidence="2">
    <location>
        <begin position="5"/>
        <end position="90"/>
    </location>
</feature>
<feature type="active site" evidence="2">
    <location>
        <position position="20"/>
    </location>
</feature>
<feature type="active site" evidence="2">
    <location>
        <position position="38"/>
    </location>
</feature>
<reference key="1">
    <citation type="journal article" date="2011" name="Stand. Genomic Sci.">
        <title>Complete genome sequence of the halophilic and highly halotolerant Chromohalobacter salexigens type strain (1H11(T)).</title>
        <authorList>
            <person name="Copeland A."/>
            <person name="O'Connor K."/>
            <person name="Lucas S."/>
            <person name="Lapidus A."/>
            <person name="Berry K.W."/>
            <person name="Detter J.C."/>
            <person name="Del Rio T.G."/>
            <person name="Hammon N."/>
            <person name="Dalin E."/>
            <person name="Tice H."/>
            <person name="Pitluck S."/>
            <person name="Bruce D."/>
            <person name="Goodwin L."/>
            <person name="Han C."/>
            <person name="Tapia R."/>
            <person name="Saunders E."/>
            <person name="Schmutz J."/>
            <person name="Brettin T."/>
            <person name="Larimer F."/>
            <person name="Land M."/>
            <person name="Hauser L."/>
            <person name="Vargas C."/>
            <person name="Nieto J.J."/>
            <person name="Kyrpides N.C."/>
            <person name="Ivanova N."/>
            <person name="Goker M."/>
            <person name="Klenk H.P."/>
            <person name="Csonka L.N."/>
            <person name="Woyke T."/>
        </authorList>
    </citation>
    <scope>NUCLEOTIDE SEQUENCE [LARGE SCALE GENOMIC DNA]</scope>
    <source>
        <strain>ATCC BAA-138 / DSM 3043 / CIP 106854 / NCIMB 13768 / 1H11</strain>
    </source>
</reference>
<evidence type="ECO:0000250" key="1">
    <source>
        <dbReference type="UniProtKB" id="P0AB65"/>
    </source>
</evidence>
<evidence type="ECO:0000255" key="2">
    <source>
        <dbReference type="PROSITE-ProRule" id="PRU00520"/>
    </source>
</evidence>
<evidence type="ECO:0000305" key="3"/>
<sequence length="90" mass="9803">MHDRCLKAWVTGRVQGVGFRAATRDQALTAGVTGYARNLPDGRVEVLLCGESSAVDRVVRWLWQGPPASRVTHVECEQAEDPPPGTFELG</sequence>